<gene>
    <name type="ordered locus">SH0717</name>
</gene>
<protein>
    <recommendedName>
        <fullName evidence="1">UPF0060 membrane protein SH0717</fullName>
    </recommendedName>
</protein>
<reference key="1">
    <citation type="journal article" date="2005" name="J. Bacteriol.">
        <title>Whole-genome sequencing of Staphylococcus haemolyticus uncovers the extreme plasticity of its genome and the evolution of human-colonizing staphylococcal species.</title>
        <authorList>
            <person name="Takeuchi F."/>
            <person name="Watanabe S."/>
            <person name="Baba T."/>
            <person name="Yuzawa H."/>
            <person name="Ito T."/>
            <person name="Morimoto Y."/>
            <person name="Kuroda M."/>
            <person name="Cui L."/>
            <person name="Takahashi M."/>
            <person name="Ankai A."/>
            <person name="Baba S."/>
            <person name="Fukui S."/>
            <person name="Lee J.C."/>
            <person name="Hiramatsu K."/>
        </authorList>
    </citation>
    <scope>NUCLEOTIDE SEQUENCE [LARGE SCALE GENOMIC DNA]</scope>
    <source>
        <strain>JCSC1435</strain>
    </source>
</reference>
<name>Y717_STAHJ</name>
<sequence length="108" mass="11978">MLYSIFIFLLAGLCEIGGGYLIWLWLREGQSSWLGFIGGVILMMYGVIATFQSFPTFGRVYAAYGGVFIVMSLIWAYIVDKQAPDKYDLIGACICIIGVCVMILPSRT</sequence>
<dbReference type="EMBL" id="AP006716">
    <property type="protein sequence ID" value="BAE04026.1"/>
    <property type="molecule type" value="Genomic_DNA"/>
</dbReference>
<dbReference type="RefSeq" id="WP_011275042.1">
    <property type="nucleotide sequence ID" value="NC_007168.1"/>
</dbReference>
<dbReference type="SMR" id="Q4L8J9"/>
<dbReference type="KEGG" id="sha:SH0717"/>
<dbReference type="eggNOG" id="COG1742">
    <property type="taxonomic scope" value="Bacteria"/>
</dbReference>
<dbReference type="HOGENOM" id="CLU_117653_0_1_9"/>
<dbReference type="OrthoDB" id="123240at2"/>
<dbReference type="Proteomes" id="UP000000543">
    <property type="component" value="Chromosome"/>
</dbReference>
<dbReference type="GO" id="GO:0005886">
    <property type="term" value="C:plasma membrane"/>
    <property type="evidence" value="ECO:0007669"/>
    <property type="project" value="UniProtKB-SubCell"/>
</dbReference>
<dbReference type="Gene3D" id="1.10.3730.20">
    <property type="match status" value="1"/>
</dbReference>
<dbReference type="HAMAP" id="MF_00010">
    <property type="entry name" value="UPF0060"/>
    <property type="match status" value="1"/>
</dbReference>
<dbReference type="InterPro" id="IPR003844">
    <property type="entry name" value="UPF0060"/>
</dbReference>
<dbReference type="NCBIfam" id="NF002586">
    <property type="entry name" value="PRK02237.1"/>
    <property type="match status" value="1"/>
</dbReference>
<dbReference type="PANTHER" id="PTHR36116">
    <property type="entry name" value="UPF0060 MEMBRANE PROTEIN YNFA"/>
    <property type="match status" value="1"/>
</dbReference>
<dbReference type="PANTHER" id="PTHR36116:SF1">
    <property type="entry name" value="UPF0060 MEMBRANE PROTEIN YNFA"/>
    <property type="match status" value="1"/>
</dbReference>
<dbReference type="Pfam" id="PF02694">
    <property type="entry name" value="UPF0060"/>
    <property type="match status" value="1"/>
</dbReference>
<dbReference type="SUPFAM" id="SSF103481">
    <property type="entry name" value="Multidrug resistance efflux transporter EmrE"/>
    <property type="match status" value="1"/>
</dbReference>
<evidence type="ECO:0000255" key="1">
    <source>
        <dbReference type="HAMAP-Rule" id="MF_00010"/>
    </source>
</evidence>
<proteinExistence type="inferred from homology"/>
<organism>
    <name type="scientific">Staphylococcus haemolyticus (strain JCSC1435)</name>
    <dbReference type="NCBI Taxonomy" id="279808"/>
    <lineage>
        <taxon>Bacteria</taxon>
        <taxon>Bacillati</taxon>
        <taxon>Bacillota</taxon>
        <taxon>Bacilli</taxon>
        <taxon>Bacillales</taxon>
        <taxon>Staphylococcaceae</taxon>
        <taxon>Staphylococcus</taxon>
    </lineage>
</organism>
<accession>Q4L8J9</accession>
<keyword id="KW-1003">Cell membrane</keyword>
<keyword id="KW-0472">Membrane</keyword>
<keyword id="KW-0812">Transmembrane</keyword>
<keyword id="KW-1133">Transmembrane helix</keyword>
<feature type="chain" id="PRO_0000282272" description="UPF0060 membrane protein SH0717">
    <location>
        <begin position="1"/>
        <end position="108"/>
    </location>
</feature>
<feature type="transmembrane region" description="Helical" evidence="1">
    <location>
        <begin position="5"/>
        <end position="25"/>
    </location>
</feature>
<feature type="transmembrane region" description="Helical" evidence="1">
    <location>
        <begin position="31"/>
        <end position="51"/>
    </location>
</feature>
<feature type="transmembrane region" description="Helical" evidence="1">
    <location>
        <begin position="60"/>
        <end position="80"/>
    </location>
</feature>
<feature type="transmembrane region" description="Helical" evidence="1">
    <location>
        <begin position="86"/>
        <end position="106"/>
    </location>
</feature>
<comment type="subcellular location">
    <subcellularLocation>
        <location evidence="1">Cell membrane</location>
        <topology evidence="1">Multi-pass membrane protein</topology>
    </subcellularLocation>
</comment>
<comment type="similarity">
    <text evidence="1">Belongs to the UPF0060 family.</text>
</comment>